<protein>
    <recommendedName>
        <fullName evidence="1">Cell division protein DivIB</fullName>
    </recommendedName>
</protein>
<feature type="chain" id="PRO_0000414785" description="Cell division protein DivIB">
    <location>
        <begin position="1"/>
        <end position="440"/>
    </location>
</feature>
<feature type="topological domain" description="Cytoplasmic" evidence="1">
    <location>
        <begin position="1"/>
        <end position="174"/>
    </location>
</feature>
<feature type="transmembrane region" description="Helical" evidence="1">
    <location>
        <begin position="175"/>
        <end position="195"/>
    </location>
</feature>
<feature type="topological domain" description="Extracellular" evidence="1">
    <location>
        <begin position="196"/>
        <end position="440"/>
    </location>
</feature>
<feature type="domain" description="POTRA" evidence="2">
    <location>
        <begin position="196"/>
        <end position="264"/>
    </location>
</feature>
<feature type="region of interest" description="Disordered" evidence="3">
    <location>
        <begin position="1"/>
        <end position="97"/>
    </location>
</feature>
<feature type="region of interest" description="Disordered" evidence="3">
    <location>
        <begin position="123"/>
        <end position="154"/>
    </location>
</feature>
<feature type="region of interest" description="Disordered" evidence="3">
    <location>
        <begin position="397"/>
        <end position="440"/>
    </location>
</feature>
<feature type="compositionally biased region" description="Basic and acidic residues" evidence="3">
    <location>
        <begin position="1"/>
        <end position="10"/>
    </location>
</feature>
<feature type="compositionally biased region" description="Acidic residues" evidence="3">
    <location>
        <begin position="12"/>
        <end position="21"/>
    </location>
</feature>
<feature type="compositionally biased region" description="Basic residues" evidence="3">
    <location>
        <begin position="27"/>
        <end position="39"/>
    </location>
</feature>
<feature type="compositionally biased region" description="Low complexity" evidence="3">
    <location>
        <begin position="78"/>
        <end position="87"/>
    </location>
</feature>
<feature type="compositionally biased region" description="Acidic residues" evidence="3">
    <location>
        <begin position="88"/>
        <end position="97"/>
    </location>
</feature>
<feature type="compositionally biased region" description="Polar residues" evidence="3">
    <location>
        <begin position="124"/>
        <end position="134"/>
    </location>
</feature>
<feature type="compositionally biased region" description="Basic and acidic residues" evidence="3">
    <location>
        <begin position="406"/>
        <end position="425"/>
    </location>
</feature>
<feature type="compositionally biased region" description="Polar residues" evidence="3">
    <location>
        <begin position="427"/>
        <end position="440"/>
    </location>
</feature>
<proteinExistence type="inferred from homology"/>
<dbReference type="EMBL" id="BX571856">
    <property type="protein sequence ID" value="CAG40162.1"/>
    <property type="molecule type" value="Genomic_DNA"/>
</dbReference>
<dbReference type="SMR" id="Q6GHQ1"/>
<dbReference type="KEGG" id="sar:SAR1160"/>
<dbReference type="HOGENOM" id="CLU_046278_3_1_9"/>
<dbReference type="Proteomes" id="UP000000596">
    <property type="component" value="Chromosome"/>
</dbReference>
<dbReference type="GO" id="GO:0032153">
    <property type="term" value="C:cell division site"/>
    <property type="evidence" value="ECO:0007669"/>
    <property type="project" value="UniProtKB-UniRule"/>
</dbReference>
<dbReference type="GO" id="GO:0005886">
    <property type="term" value="C:plasma membrane"/>
    <property type="evidence" value="ECO:0007669"/>
    <property type="project" value="UniProtKB-SubCell"/>
</dbReference>
<dbReference type="GO" id="GO:0043093">
    <property type="term" value="P:FtsZ-dependent cytokinesis"/>
    <property type="evidence" value="ECO:0007669"/>
    <property type="project" value="UniProtKB-UniRule"/>
</dbReference>
<dbReference type="Gene3D" id="3.40.50.10960">
    <property type="match status" value="1"/>
</dbReference>
<dbReference type="Gene3D" id="3.10.20.310">
    <property type="entry name" value="membrane protein fhac"/>
    <property type="match status" value="1"/>
</dbReference>
<dbReference type="HAMAP" id="MF_00912">
    <property type="entry name" value="DivIB"/>
    <property type="match status" value="1"/>
</dbReference>
<dbReference type="InterPro" id="IPR005548">
    <property type="entry name" value="Cell_div_FtsQ/DivIB_C"/>
</dbReference>
<dbReference type="InterPro" id="IPR026580">
    <property type="entry name" value="DivIB"/>
</dbReference>
<dbReference type="InterPro" id="IPR050487">
    <property type="entry name" value="FtsQ_DivIB"/>
</dbReference>
<dbReference type="InterPro" id="IPR034746">
    <property type="entry name" value="POTRA"/>
</dbReference>
<dbReference type="InterPro" id="IPR013685">
    <property type="entry name" value="POTRA_FtsQ_type"/>
</dbReference>
<dbReference type="PANTHER" id="PTHR37820">
    <property type="entry name" value="CELL DIVISION PROTEIN DIVIB"/>
    <property type="match status" value="1"/>
</dbReference>
<dbReference type="PANTHER" id="PTHR37820:SF1">
    <property type="entry name" value="CELL DIVISION PROTEIN FTSQ"/>
    <property type="match status" value="1"/>
</dbReference>
<dbReference type="Pfam" id="PF03799">
    <property type="entry name" value="FtsQ_DivIB_C"/>
    <property type="match status" value="1"/>
</dbReference>
<dbReference type="Pfam" id="PF08478">
    <property type="entry name" value="POTRA_1"/>
    <property type="match status" value="1"/>
</dbReference>
<dbReference type="PROSITE" id="PS51779">
    <property type="entry name" value="POTRA"/>
    <property type="match status" value="1"/>
</dbReference>
<accession>Q6GHQ1</accession>
<reference key="1">
    <citation type="journal article" date="2004" name="Proc. Natl. Acad. Sci. U.S.A.">
        <title>Complete genomes of two clinical Staphylococcus aureus strains: evidence for the rapid evolution of virulence and drug resistance.</title>
        <authorList>
            <person name="Holden M.T.G."/>
            <person name="Feil E.J."/>
            <person name="Lindsay J.A."/>
            <person name="Peacock S.J."/>
            <person name="Day N.P.J."/>
            <person name="Enright M.C."/>
            <person name="Foster T.J."/>
            <person name="Moore C.E."/>
            <person name="Hurst L."/>
            <person name="Atkin R."/>
            <person name="Barron A."/>
            <person name="Bason N."/>
            <person name="Bentley S.D."/>
            <person name="Chillingworth C."/>
            <person name="Chillingworth T."/>
            <person name="Churcher C."/>
            <person name="Clark L."/>
            <person name="Corton C."/>
            <person name="Cronin A."/>
            <person name="Doggett J."/>
            <person name="Dowd L."/>
            <person name="Feltwell T."/>
            <person name="Hance Z."/>
            <person name="Harris B."/>
            <person name="Hauser H."/>
            <person name="Holroyd S."/>
            <person name="Jagels K."/>
            <person name="James K.D."/>
            <person name="Lennard N."/>
            <person name="Line A."/>
            <person name="Mayes R."/>
            <person name="Moule S."/>
            <person name="Mungall K."/>
            <person name="Ormond D."/>
            <person name="Quail M.A."/>
            <person name="Rabbinowitsch E."/>
            <person name="Rutherford K.M."/>
            <person name="Sanders M."/>
            <person name="Sharp S."/>
            <person name="Simmonds M."/>
            <person name="Stevens K."/>
            <person name="Whitehead S."/>
            <person name="Barrell B.G."/>
            <person name="Spratt B.G."/>
            <person name="Parkhill J."/>
        </authorList>
    </citation>
    <scope>NUCLEOTIDE SEQUENCE [LARGE SCALE GENOMIC DNA]</scope>
    <source>
        <strain>MRSA252</strain>
    </source>
</reference>
<keyword id="KW-0131">Cell cycle</keyword>
<keyword id="KW-0132">Cell division</keyword>
<keyword id="KW-1003">Cell membrane</keyword>
<keyword id="KW-0472">Membrane</keyword>
<keyword id="KW-0812">Transmembrane</keyword>
<keyword id="KW-1133">Transmembrane helix</keyword>
<name>DIVIB_STAAR</name>
<comment type="function">
    <text evidence="1">Cell division protein that may be involved in stabilizing or promoting the assembly of the division complex.</text>
</comment>
<comment type="subcellular location">
    <subcellularLocation>
        <location evidence="1">Cell membrane</location>
        <topology evidence="1">Single-pass type II membrane protein</topology>
    </subcellularLocation>
    <text evidence="1">Localizes to the division septum.</text>
</comment>
<comment type="similarity">
    <text evidence="1">Belongs to the FtsQ/DivIB family. DivIB subfamily.</text>
</comment>
<evidence type="ECO:0000255" key="1">
    <source>
        <dbReference type="HAMAP-Rule" id="MF_00912"/>
    </source>
</evidence>
<evidence type="ECO:0000255" key="2">
    <source>
        <dbReference type="PROSITE-ProRule" id="PRU01115"/>
    </source>
</evidence>
<evidence type="ECO:0000256" key="3">
    <source>
        <dbReference type="SAM" id="MobiDB-lite"/>
    </source>
</evidence>
<organism>
    <name type="scientific">Staphylococcus aureus (strain MRSA252)</name>
    <dbReference type="NCBI Taxonomy" id="282458"/>
    <lineage>
        <taxon>Bacteria</taxon>
        <taxon>Bacillati</taxon>
        <taxon>Bacillota</taxon>
        <taxon>Bacilli</taxon>
        <taxon>Bacillales</taxon>
        <taxon>Staphylococcaceae</taxon>
        <taxon>Staphylococcus</taxon>
    </lineage>
</organism>
<sequence>MMDDKTKNDQQESNEDKDELELFTRNTSKKRRQRKRSKATHFSNQNKDDTSQQADFDEEIYLINKDFKKEQGNEENNDSASSHANDNNIDDSTDSNIENEDYRYNQETDDQNESNGIAVDNEQHQSAPNEQNSDSNDEETVTKKERKSKVTQLKPLTLEEKRKVRRKRQKRIQYSVITILVLLIAVILIYMFSPLSKIAHVNINGNNHVSTSKINKVLGVKNDSRMYTFSKKNAINDLEEDPLIKSVEIHKQLPNTLNVDITENEIIALVKYKGKYLPLLENGKLLKGSNDVKINDAPVMDGFKGTKEDDMIKALSEMTPEVRRYIAEVTYAPSKNKQSRIELFTTDGLQVIGDISTISKKMKYYPQMSQSLARDSSGKLKTRGYIDLSVGASFIPYRGNTSTQSESDKNVTKSSQEENQAKEELQSVLNKINKQSSKNN</sequence>
<gene>
    <name evidence="1" type="primary">divIB</name>
    <name type="ordered locus">SAR1160</name>
</gene>